<gene>
    <name type="primary">TUBB1</name>
</gene>
<organism>
    <name type="scientific">Homo sapiens</name>
    <name type="common">Human</name>
    <dbReference type="NCBI Taxonomy" id="9606"/>
    <lineage>
        <taxon>Eukaryota</taxon>
        <taxon>Metazoa</taxon>
        <taxon>Chordata</taxon>
        <taxon>Craniata</taxon>
        <taxon>Vertebrata</taxon>
        <taxon>Euteleostomi</taxon>
        <taxon>Mammalia</taxon>
        <taxon>Eutheria</taxon>
        <taxon>Euarchontoglires</taxon>
        <taxon>Primates</taxon>
        <taxon>Haplorrhini</taxon>
        <taxon>Catarrhini</taxon>
        <taxon>Hominidae</taxon>
        <taxon>Homo</taxon>
    </lineage>
</organism>
<proteinExistence type="evidence at protein level"/>
<dbReference type="EMBL" id="AJ292757">
    <property type="protein sequence ID" value="CAC16605.1"/>
    <property type="molecule type" value="mRNA"/>
</dbReference>
<dbReference type="EMBL" id="AL109840">
    <property type="status" value="NOT_ANNOTATED_CDS"/>
    <property type="molecule type" value="Genomic_DNA"/>
</dbReference>
<dbReference type="EMBL" id="BC033679">
    <property type="protein sequence ID" value="AAH33679.1"/>
    <property type="molecule type" value="mRNA"/>
</dbReference>
<dbReference type="CCDS" id="CCDS13475.1"/>
<dbReference type="RefSeq" id="NP_110400.1">
    <property type="nucleotide sequence ID" value="NM_030773.4"/>
</dbReference>
<dbReference type="SMR" id="Q9H4B7"/>
<dbReference type="BioGRID" id="123347">
    <property type="interactions" value="134"/>
</dbReference>
<dbReference type="CORUM" id="Q9H4B7"/>
<dbReference type="DIP" id="DIP-42487N"/>
<dbReference type="FunCoup" id="Q9H4B7">
    <property type="interactions" value="1015"/>
</dbReference>
<dbReference type="IntAct" id="Q9H4B7">
    <property type="interactions" value="128"/>
</dbReference>
<dbReference type="MINT" id="Q9H4B7"/>
<dbReference type="STRING" id="9606.ENSP00000217133"/>
<dbReference type="BindingDB" id="Q9H4B7"/>
<dbReference type="ChEMBL" id="CHEMBL1915"/>
<dbReference type="DrugBank" id="DB06772">
    <property type="generic name" value="Cabazitaxel"/>
</dbReference>
<dbReference type="DrugBank" id="DB05147">
    <property type="generic name" value="CYT997"/>
</dbReference>
<dbReference type="DrugBank" id="DB01248">
    <property type="generic name" value="Docetaxel"/>
</dbReference>
<dbReference type="DrugBank" id="DB01873">
    <property type="generic name" value="Epothilone D"/>
</dbReference>
<dbReference type="DrugBank" id="DB08871">
    <property type="generic name" value="Eribulin"/>
</dbReference>
<dbReference type="DrugBank" id="DB12334">
    <property type="generic name" value="Milataxel"/>
</dbReference>
<dbReference type="DrugBank" id="DB01229">
    <property type="generic name" value="Paclitaxel"/>
</dbReference>
<dbReference type="DrugBank" id="DB03010">
    <property type="generic name" value="Patupilone"/>
</dbReference>
<dbReference type="DrugBank" id="DB12695">
    <property type="generic name" value="Phenethyl Isothiocyanate"/>
</dbReference>
<dbReference type="DrugBank" id="DB00309">
    <property type="generic name" value="Vindesine"/>
</dbReference>
<dbReference type="DrugBank" id="DB06042">
    <property type="generic name" value="ZEN-012"/>
</dbReference>
<dbReference type="DrugCentral" id="Q9H4B7"/>
<dbReference type="TCDB" id="8.A.173.1.2">
    <property type="family name" value="the tubulin (tubulin) family"/>
</dbReference>
<dbReference type="GlyGen" id="Q9H4B7">
    <property type="glycosylation" value="1 site, 1 N-linked glycan (1 site)"/>
</dbReference>
<dbReference type="iPTMnet" id="Q9H4B7"/>
<dbReference type="PhosphoSitePlus" id="Q9H4B7"/>
<dbReference type="BioMuta" id="TUBB1"/>
<dbReference type="DMDM" id="62903515"/>
<dbReference type="OGP" id="Q9H4B7"/>
<dbReference type="jPOST" id="Q9H4B7"/>
<dbReference type="MassIVE" id="Q9H4B7"/>
<dbReference type="PaxDb" id="9606-ENSP00000217133"/>
<dbReference type="PeptideAtlas" id="Q9H4B7"/>
<dbReference type="ProteomicsDB" id="80819"/>
<dbReference type="TopDownProteomics" id="Q9H4B7"/>
<dbReference type="ABCD" id="Q9H4B7">
    <property type="antibodies" value="3 sequenced antibodies"/>
</dbReference>
<dbReference type="Antibodypedia" id="3801">
    <property type="antibodies" value="498 antibodies from 35 providers"/>
</dbReference>
<dbReference type="DNASU" id="81027"/>
<dbReference type="Ensembl" id="ENST00000217133.2">
    <property type="protein sequence ID" value="ENSP00000217133.1"/>
    <property type="gene ID" value="ENSG00000101162.4"/>
</dbReference>
<dbReference type="GeneID" id="81027"/>
<dbReference type="KEGG" id="hsa:81027"/>
<dbReference type="MANE-Select" id="ENST00000217133.2">
    <property type="protein sequence ID" value="ENSP00000217133.1"/>
    <property type="RefSeq nucleotide sequence ID" value="NM_030773.4"/>
    <property type="RefSeq protein sequence ID" value="NP_110400.1"/>
</dbReference>
<dbReference type="UCSC" id="uc002yak.3">
    <property type="organism name" value="human"/>
</dbReference>
<dbReference type="AGR" id="HGNC:16257"/>
<dbReference type="CTD" id="81027"/>
<dbReference type="DisGeNET" id="81027"/>
<dbReference type="GeneCards" id="TUBB1"/>
<dbReference type="HGNC" id="HGNC:16257">
    <property type="gene designation" value="TUBB1"/>
</dbReference>
<dbReference type="HPA" id="ENSG00000101162">
    <property type="expression patterns" value="Tissue enhanced (bone marrow, lymphoid tissue)"/>
</dbReference>
<dbReference type="MalaCards" id="TUBB1"/>
<dbReference type="MIM" id="612901">
    <property type="type" value="gene"/>
</dbReference>
<dbReference type="MIM" id="613112">
    <property type="type" value="phenotype"/>
</dbReference>
<dbReference type="neXtProt" id="NX_Q9H4B7"/>
<dbReference type="OpenTargets" id="ENSG00000101162"/>
<dbReference type="Orphanet" id="140957">
    <property type="disease" value="Autosomal dominant macrothrombocytopenia"/>
</dbReference>
<dbReference type="PharmGKB" id="PA38100"/>
<dbReference type="VEuPathDB" id="HostDB:ENSG00000101162"/>
<dbReference type="eggNOG" id="KOG1375">
    <property type="taxonomic scope" value="Eukaryota"/>
</dbReference>
<dbReference type="GeneTree" id="ENSGT00940000159809"/>
<dbReference type="HOGENOM" id="CLU_015718_1_1_1"/>
<dbReference type="InParanoid" id="Q9H4B7"/>
<dbReference type="OMA" id="NTDACFC"/>
<dbReference type="OrthoDB" id="1662883at2759"/>
<dbReference type="PAN-GO" id="Q9H4B7">
    <property type="GO annotations" value="6 GO annotations based on evolutionary models"/>
</dbReference>
<dbReference type="PhylomeDB" id="Q9H4B7"/>
<dbReference type="TreeFam" id="TF300298"/>
<dbReference type="PathwayCommons" id="Q9H4B7"/>
<dbReference type="Reactome" id="R-HSA-1445148">
    <property type="pathway name" value="Translocation of SLC2A4 (GLUT4) to the plasma membrane"/>
</dbReference>
<dbReference type="Reactome" id="R-HSA-190840">
    <property type="pathway name" value="Microtubule-dependent trafficking of connexons from Golgi to the plasma membrane"/>
</dbReference>
<dbReference type="Reactome" id="R-HSA-190861">
    <property type="pathway name" value="Gap junction assembly"/>
</dbReference>
<dbReference type="Reactome" id="R-HSA-2132295">
    <property type="pathway name" value="MHC class II antigen presentation"/>
</dbReference>
<dbReference type="Reactome" id="R-HSA-2467813">
    <property type="pathway name" value="Separation of Sister Chromatids"/>
</dbReference>
<dbReference type="Reactome" id="R-HSA-2500257">
    <property type="pathway name" value="Resolution of Sister Chromatid Cohesion"/>
</dbReference>
<dbReference type="Reactome" id="R-HSA-3371497">
    <property type="pathway name" value="HSP90 chaperone cycle for steroid hormone receptors (SHR) in the presence of ligand"/>
</dbReference>
<dbReference type="Reactome" id="R-HSA-380320">
    <property type="pathway name" value="Recruitment of NuMA to mitotic centrosomes"/>
</dbReference>
<dbReference type="Reactome" id="R-HSA-389957">
    <property type="pathway name" value="Prefoldin mediated transfer of substrate to CCT/TriC"/>
</dbReference>
<dbReference type="Reactome" id="R-HSA-389960">
    <property type="pathway name" value="Formation of tubulin folding intermediates by CCT/TriC"/>
</dbReference>
<dbReference type="Reactome" id="R-HSA-389977">
    <property type="pathway name" value="Post-chaperonin tubulin folding pathway"/>
</dbReference>
<dbReference type="Reactome" id="R-HSA-437239">
    <property type="pathway name" value="Recycling pathway of L1"/>
</dbReference>
<dbReference type="Reactome" id="R-HSA-5610787">
    <property type="pathway name" value="Hedgehog 'off' state"/>
</dbReference>
<dbReference type="Reactome" id="R-HSA-5617833">
    <property type="pathway name" value="Cilium Assembly"/>
</dbReference>
<dbReference type="Reactome" id="R-HSA-5620924">
    <property type="pathway name" value="Intraflagellar transport"/>
</dbReference>
<dbReference type="Reactome" id="R-HSA-5626467">
    <property type="pathway name" value="RHO GTPases activate IQGAPs"/>
</dbReference>
<dbReference type="Reactome" id="R-HSA-5663220">
    <property type="pathway name" value="RHO GTPases Activate Formins"/>
</dbReference>
<dbReference type="Reactome" id="R-HSA-6807878">
    <property type="pathway name" value="COPI-mediated anterograde transport"/>
</dbReference>
<dbReference type="Reactome" id="R-HSA-6811434">
    <property type="pathway name" value="COPI-dependent Golgi-to-ER retrograde traffic"/>
</dbReference>
<dbReference type="Reactome" id="R-HSA-6811436">
    <property type="pathway name" value="COPI-independent Golgi-to-ER retrograde traffic"/>
</dbReference>
<dbReference type="Reactome" id="R-HSA-68877">
    <property type="pathway name" value="Mitotic Prometaphase"/>
</dbReference>
<dbReference type="Reactome" id="R-HSA-8852276">
    <property type="pathway name" value="The role of GTSE1 in G2/M progression after G2 checkpoint"/>
</dbReference>
<dbReference type="Reactome" id="R-HSA-8955332">
    <property type="pathway name" value="Carboxyterminal post-translational modifications of tubulin"/>
</dbReference>
<dbReference type="Reactome" id="R-HSA-9609690">
    <property type="pathway name" value="HCMV Early Events"/>
</dbReference>
<dbReference type="Reactome" id="R-HSA-9609736">
    <property type="pathway name" value="Assembly and cell surface presentation of NMDA receptors"/>
</dbReference>
<dbReference type="Reactome" id="R-HSA-9619483">
    <property type="pathway name" value="Activation of AMPK downstream of NMDARs"/>
</dbReference>
<dbReference type="Reactome" id="R-HSA-9646399">
    <property type="pathway name" value="Aggrephagy"/>
</dbReference>
<dbReference type="Reactome" id="R-HSA-9648025">
    <property type="pathway name" value="EML4 and NUDC in mitotic spindle formation"/>
</dbReference>
<dbReference type="Reactome" id="R-HSA-9668328">
    <property type="pathway name" value="Sealing of the nuclear envelope (NE) by ESCRT-III"/>
</dbReference>
<dbReference type="Reactome" id="R-HSA-983189">
    <property type="pathway name" value="Kinesins"/>
</dbReference>
<dbReference type="Reactome" id="R-HSA-9833482">
    <property type="pathway name" value="PKR-mediated signaling"/>
</dbReference>
<dbReference type="SignaLink" id="Q9H4B7"/>
<dbReference type="SIGNOR" id="Q9H4B7"/>
<dbReference type="BioGRID-ORCS" id="81027">
    <property type="hits" value="32 hits in 1167 CRISPR screens"/>
</dbReference>
<dbReference type="ChiTaRS" id="TUBB1">
    <property type="organism name" value="human"/>
</dbReference>
<dbReference type="GeneWiki" id="TUBB1"/>
<dbReference type="GenomeRNAi" id="81027"/>
<dbReference type="Pharos" id="Q9H4B7">
    <property type="development level" value="Tclin"/>
</dbReference>
<dbReference type="PRO" id="PR:Q9H4B7"/>
<dbReference type="Proteomes" id="UP000005640">
    <property type="component" value="Chromosome 20"/>
</dbReference>
<dbReference type="RNAct" id="Q9H4B7">
    <property type="molecule type" value="protein"/>
</dbReference>
<dbReference type="Bgee" id="ENSG00000101162">
    <property type="expression patterns" value="Expressed in monocyte and 101 other cell types or tissues"/>
</dbReference>
<dbReference type="GO" id="GO:0005737">
    <property type="term" value="C:cytoplasm"/>
    <property type="evidence" value="ECO:0000314"/>
    <property type="project" value="UniProtKB"/>
</dbReference>
<dbReference type="GO" id="GO:0070062">
    <property type="term" value="C:extracellular exosome"/>
    <property type="evidence" value="ECO:0007005"/>
    <property type="project" value="UniProtKB"/>
</dbReference>
<dbReference type="GO" id="GO:0045171">
    <property type="term" value="C:intercellular bridge"/>
    <property type="evidence" value="ECO:0000314"/>
    <property type="project" value="HPA"/>
</dbReference>
<dbReference type="GO" id="GO:0005874">
    <property type="term" value="C:microtubule"/>
    <property type="evidence" value="ECO:0000318"/>
    <property type="project" value="GO_Central"/>
</dbReference>
<dbReference type="GO" id="GO:0015630">
    <property type="term" value="C:microtubule cytoskeleton"/>
    <property type="evidence" value="ECO:0000314"/>
    <property type="project" value="HPA"/>
</dbReference>
<dbReference type="GO" id="GO:0072686">
    <property type="term" value="C:mitotic spindle"/>
    <property type="evidence" value="ECO:0000314"/>
    <property type="project" value="HPA"/>
</dbReference>
<dbReference type="GO" id="GO:0005525">
    <property type="term" value="F:GTP binding"/>
    <property type="evidence" value="ECO:0000318"/>
    <property type="project" value="GO_Central"/>
</dbReference>
<dbReference type="GO" id="GO:0003924">
    <property type="term" value="F:GTPase activity"/>
    <property type="evidence" value="ECO:0007669"/>
    <property type="project" value="InterPro"/>
</dbReference>
<dbReference type="GO" id="GO:0046872">
    <property type="term" value="F:metal ion binding"/>
    <property type="evidence" value="ECO:0007669"/>
    <property type="project" value="UniProtKB-KW"/>
</dbReference>
<dbReference type="GO" id="GO:0005200">
    <property type="term" value="F:structural constituent of cytoskeleton"/>
    <property type="evidence" value="ECO:0000318"/>
    <property type="project" value="GO_Central"/>
</dbReference>
<dbReference type="GO" id="GO:0000226">
    <property type="term" value="P:microtubule cytoskeleton organization"/>
    <property type="evidence" value="ECO:0000318"/>
    <property type="project" value="GO_Central"/>
</dbReference>
<dbReference type="GO" id="GO:0046785">
    <property type="term" value="P:microtubule polymerization"/>
    <property type="evidence" value="ECO:0007669"/>
    <property type="project" value="Ensembl"/>
</dbReference>
<dbReference type="GO" id="GO:0000278">
    <property type="term" value="P:mitotic cell cycle"/>
    <property type="evidence" value="ECO:0000318"/>
    <property type="project" value="GO_Central"/>
</dbReference>
<dbReference type="GO" id="GO:0070527">
    <property type="term" value="P:platelet aggregation"/>
    <property type="evidence" value="ECO:0007669"/>
    <property type="project" value="Ensembl"/>
</dbReference>
<dbReference type="GO" id="GO:0030220">
    <property type="term" value="P:platelet formation"/>
    <property type="evidence" value="ECO:0007669"/>
    <property type="project" value="Ensembl"/>
</dbReference>
<dbReference type="GO" id="GO:0051225">
    <property type="term" value="P:spindle assembly"/>
    <property type="evidence" value="ECO:0007669"/>
    <property type="project" value="Ensembl"/>
</dbReference>
<dbReference type="GO" id="GO:0030878">
    <property type="term" value="P:thyroid gland development"/>
    <property type="evidence" value="ECO:0007669"/>
    <property type="project" value="Ensembl"/>
</dbReference>
<dbReference type="GO" id="GO:0070327">
    <property type="term" value="P:thyroid hormone transport"/>
    <property type="evidence" value="ECO:0007669"/>
    <property type="project" value="Ensembl"/>
</dbReference>
<dbReference type="CDD" id="cd02187">
    <property type="entry name" value="beta_tubulin"/>
    <property type="match status" value="1"/>
</dbReference>
<dbReference type="FunFam" id="1.10.287.600:FF:000008">
    <property type="entry name" value="Tubulin beta chain"/>
    <property type="match status" value="1"/>
</dbReference>
<dbReference type="FunFam" id="3.30.1330.20:FF:000002">
    <property type="entry name" value="Tubulin beta chain"/>
    <property type="match status" value="1"/>
</dbReference>
<dbReference type="FunFam" id="3.40.50.1440:FF:000006">
    <property type="entry name" value="Tubulin beta chain"/>
    <property type="match status" value="1"/>
</dbReference>
<dbReference type="Gene3D" id="1.10.287.600">
    <property type="entry name" value="Helix hairpin bin"/>
    <property type="match status" value="1"/>
</dbReference>
<dbReference type="Gene3D" id="3.30.1330.20">
    <property type="entry name" value="Tubulin/FtsZ, C-terminal domain"/>
    <property type="match status" value="1"/>
</dbReference>
<dbReference type="Gene3D" id="3.40.50.1440">
    <property type="entry name" value="Tubulin/FtsZ, GTPase domain"/>
    <property type="match status" value="1"/>
</dbReference>
<dbReference type="InterPro" id="IPR013838">
    <property type="entry name" value="Beta-tubulin_BS"/>
</dbReference>
<dbReference type="InterPro" id="IPR002453">
    <property type="entry name" value="Beta_tubulin"/>
</dbReference>
<dbReference type="InterPro" id="IPR008280">
    <property type="entry name" value="Tub_FtsZ_C"/>
</dbReference>
<dbReference type="InterPro" id="IPR000217">
    <property type="entry name" value="Tubulin"/>
</dbReference>
<dbReference type="InterPro" id="IPR037103">
    <property type="entry name" value="Tubulin/FtsZ-like_C"/>
</dbReference>
<dbReference type="InterPro" id="IPR018316">
    <property type="entry name" value="Tubulin/FtsZ_2-layer-sand-dom"/>
</dbReference>
<dbReference type="InterPro" id="IPR036525">
    <property type="entry name" value="Tubulin/FtsZ_GTPase_sf"/>
</dbReference>
<dbReference type="InterPro" id="IPR023123">
    <property type="entry name" value="Tubulin_C"/>
</dbReference>
<dbReference type="InterPro" id="IPR017975">
    <property type="entry name" value="Tubulin_CS"/>
</dbReference>
<dbReference type="InterPro" id="IPR003008">
    <property type="entry name" value="Tubulin_FtsZ_GTPase"/>
</dbReference>
<dbReference type="PANTHER" id="PTHR11588">
    <property type="entry name" value="TUBULIN"/>
    <property type="match status" value="1"/>
</dbReference>
<dbReference type="Pfam" id="PF00091">
    <property type="entry name" value="Tubulin"/>
    <property type="match status" value="1"/>
</dbReference>
<dbReference type="Pfam" id="PF03953">
    <property type="entry name" value="Tubulin_C"/>
    <property type="match status" value="1"/>
</dbReference>
<dbReference type="PRINTS" id="PR01163">
    <property type="entry name" value="BETATUBULIN"/>
</dbReference>
<dbReference type="PRINTS" id="PR01161">
    <property type="entry name" value="TUBULIN"/>
</dbReference>
<dbReference type="SMART" id="SM00864">
    <property type="entry name" value="Tubulin"/>
    <property type="match status" value="1"/>
</dbReference>
<dbReference type="SMART" id="SM00865">
    <property type="entry name" value="Tubulin_C"/>
    <property type="match status" value="1"/>
</dbReference>
<dbReference type="SUPFAM" id="SSF55307">
    <property type="entry name" value="Tubulin C-terminal domain-like"/>
    <property type="match status" value="1"/>
</dbReference>
<dbReference type="SUPFAM" id="SSF52490">
    <property type="entry name" value="Tubulin nucleotide-binding domain-like"/>
    <property type="match status" value="1"/>
</dbReference>
<dbReference type="PROSITE" id="PS00227">
    <property type="entry name" value="TUBULIN"/>
    <property type="match status" value="1"/>
</dbReference>
<dbReference type="PROSITE" id="PS00228">
    <property type="entry name" value="TUBULIN_B_AUTOREG"/>
    <property type="match status" value="1"/>
</dbReference>
<accession>Q9H4B7</accession>
<keyword id="KW-0963">Cytoplasm</keyword>
<keyword id="KW-0206">Cytoskeleton</keyword>
<keyword id="KW-0903">Direct protein sequencing</keyword>
<keyword id="KW-0225">Disease variant</keyword>
<keyword id="KW-0342">GTP-binding</keyword>
<keyword id="KW-1017">Isopeptide bond</keyword>
<keyword id="KW-0460">Magnesium</keyword>
<keyword id="KW-0479">Metal-binding</keyword>
<keyword id="KW-0493">Microtubule</keyword>
<keyword id="KW-0547">Nucleotide-binding</keyword>
<keyword id="KW-0597">Phosphoprotein</keyword>
<keyword id="KW-1267">Proteomics identification</keyword>
<keyword id="KW-1185">Reference proteome</keyword>
<sequence length="451" mass="50327">MREIVHIQIGQCGNQIGAKFWEMIGEEHGIDLAGSDRGASALQLERISVYYNEAYGRKYVPRAVLVDLEPGTMDSIRSSKLGALFQPDSFVHGNSGAGNNWAKGHYTEGAELIENVLEVVRHESESCDCLQGFQIVHSLGGGTGSGMGTLLMNKIREEYPDRIMNSFSVMPSPKVSDTVVEPYNAVLSIHQLIENADACFCIDNEALYDICFRTLKLTTPTYGDLNHLVSLTMSGITTSLRFPGQLNADLRKLAVNMVPFPRLHFFMPGFAPLTAQGSQQYRALSVAELTQQMFDARNTMAACDLRRGRYLTVACIFRGKMSTKEVDQQLLSVQTRNSSCFVEWIPNNVKVAVCDIPPRGLSMAATFIGNNTAIQEIFNRVSEHFSAMFKRKAFVHWYTSEGMDINEFGEAENNIHDLVSEYQQFQDAKAVLEEDEEVTEEAEMEPEDKGH</sequence>
<comment type="function">
    <text>Tubulin is the major constituent of microtubules, a cylinder consisting of laterally associated linear protofilaments composed of alpha- and beta-tubulin heterodimers. Microtubules grow by the addition of GTP-tubulin dimers to the microtubule end, where a stabilizing cap forms. Below the cap, tubulin dimers are in GDP-bound state, owing to GTPase activity of alpha-tubulin.</text>
</comment>
<comment type="cofactor">
    <cofactor evidence="2">
        <name>Mg(2+)</name>
        <dbReference type="ChEBI" id="CHEBI:18420"/>
    </cofactor>
</comment>
<comment type="subunit">
    <text evidence="9">Dimer of alpha and beta chains. A typical microtubule is a hollow water-filled tube with an outer diameter of 25 nm and an inner diameter of 15 nM. Alpha-beta heterodimers associate head-to-tail to form protofilaments running lengthwise along the microtubule wall with the beta-tubulin subunit facing the microtubule plus end conferring a structural polarity. Microtubules usually have 13 protofilaments but different protofilament numbers can be found in some organisms and specialized cells. Interacts with RANBP10.</text>
</comment>
<comment type="subcellular location">
    <subcellularLocation>
        <location evidence="10">Cytoplasm</location>
        <location evidence="10">Cytoskeleton</location>
    </subcellularLocation>
</comment>
<comment type="tissue specificity">
    <text evidence="11">Hematopoietic cell-specific. Major isotype in leukocytes, where it represents 50% of all beta-tubulins.</text>
</comment>
<comment type="domain">
    <text evidence="1">The MREI motif is common among all beta-tubulin isoforms and may be critical for tubulin autoregulation.</text>
</comment>
<comment type="PTM">
    <text evidence="3 12">Some glutamate residues at the C-terminus are polyglutamylated, resulting in polyglutamate chains on the gamma-carboxyl group (PubMed:26875866). Polyglutamylation plays a key role in microtubule severing by spastin (SPAST). SPAST preferentially recognizes and acts on microtubules decorated with short polyglutamate tails: severing activity by SPAST increases as the number of glutamates per tubulin rises from one to eight, but decreases beyond this glutamylation threshold (PubMed:26875866). Glutamylation is also involved in cilia motility (By similarity).</text>
</comment>
<comment type="PTM">
    <text evidence="1 14">Some glutamate residues at the C-terminus are monoglycylated but not polyglycylated due to the absence of functional TTLL10 in human. Monoglycylation is mainly limited to tubulin incorporated into cilia and flagella axonemes, which is required for their stability and maintenance. Flagella glycylation controls sperm motility. Both polyglutamylation and monoglycylation can coexist on the same protein on adjacent residues, and lowering glycylation levels increases polyglutamylation, and reciprocally.</text>
</comment>
<comment type="PTM">
    <text evidence="8">Phosphorylated on Ser-172 by CDK1 during the cell cycle, from metaphase to telophase, but not in interphase. This phosphorylation inhibits tubulin incorporation into microtubules.</text>
</comment>
<comment type="disease" evidence="10">
    <disease id="DI-02623">
        <name>Macrothrombocytopenia, isolated, 1, autosomal dominant</name>
        <acronym>MACTHC1</acronym>
        <description>A congenital blood disorder characterized by increased platelet size and decreased number of circulating platelets.</description>
        <dbReference type="MIM" id="613112"/>
    </disease>
    <text>The disease is caused by variants affecting the gene represented in this entry.</text>
</comment>
<comment type="similarity">
    <text evidence="13">Belongs to the tubulin family.</text>
</comment>
<feature type="chain" id="PRO_0000048242" description="Tubulin beta-1 chain">
    <location>
        <begin position="1"/>
        <end position="451"/>
    </location>
</feature>
<feature type="region of interest" description="Disordered" evidence="6">
    <location>
        <begin position="432"/>
        <end position="451"/>
    </location>
</feature>
<feature type="short sequence motif" description="MREI motif" evidence="1">
    <location>
        <begin position="1"/>
        <end position="4"/>
    </location>
</feature>
<feature type="compositionally biased region" description="Acidic residues" evidence="6">
    <location>
        <begin position="433"/>
        <end position="451"/>
    </location>
</feature>
<feature type="binding site" evidence="4">
    <location>
        <position position="11"/>
    </location>
    <ligand>
        <name>GTP</name>
        <dbReference type="ChEBI" id="CHEBI:37565"/>
    </ligand>
</feature>
<feature type="binding site" evidence="2">
    <location>
        <position position="69"/>
    </location>
    <ligand>
        <name>GTP</name>
        <dbReference type="ChEBI" id="CHEBI:37565"/>
    </ligand>
</feature>
<feature type="binding site" evidence="2">
    <location>
        <position position="69"/>
    </location>
    <ligand>
        <name>Mg(2+)</name>
        <dbReference type="ChEBI" id="CHEBI:18420"/>
    </ligand>
</feature>
<feature type="binding site" evidence="4">
    <location>
        <position position="138"/>
    </location>
    <ligand>
        <name>GTP</name>
        <dbReference type="ChEBI" id="CHEBI:37565"/>
    </ligand>
</feature>
<feature type="binding site" evidence="4">
    <location>
        <position position="142"/>
    </location>
    <ligand>
        <name>GTP</name>
        <dbReference type="ChEBI" id="CHEBI:37565"/>
    </ligand>
</feature>
<feature type="binding site" evidence="4">
    <location>
        <position position="143"/>
    </location>
    <ligand>
        <name>GTP</name>
        <dbReference type="ChEBI" id="CHEBI:37565"/>
    </ligand>
</feature>
<feature type="binding site" evidence="4">
    <location>
        <position position="144"/>
    </location>
    <ligand>
        <name>GTP</name>
        <dbReference type="ChEBI" id="CHEBI:37565"/>
    </ligand>
</feature>
<feature type="binding site" evidence="4">
    <location>
        <position position="204"/>
    </location>
    <ligand>
        <name>GTP</name>
        <dbReference type="ChEBI" id="CHEBI:37565"/>
    </ligand>
</feature>
<feature type="binding site" evidence="4">
    <location>
        <position position="226"/>
    </location>
    <ligand>
        <name>GTP</name>
        <dbReference type="ChEBI" id="CHEBI:37565"/>
    </ligand>
</feature>
<feature type="modified residue" description="Phosphoserine; by CDK1" evidence="8">
    <location>
        <position position="172"/>
    </location>
</feature>
<feature type="modified residue" description="5-glutamyl polyglutamate" evidence="5">
    <location>
        <position position="440"/>
    </location>
</feature>
<feature type="sequence variant" id="VAR_034542" description="In dbSNP:rs415064.">
    <original>Q</original>
    <variation>H</variation>
    <location>
        <position position="43"/>
    </location>
</feature>
<feature type="sequence variant" id="VAR_034543" description="In dbSNP:rs463312." evidence="7 10">
    <original>Q</original>
    <variation>P</variation>
    <location>
        <position position="43"/>
    </location>
</feature>
<feature type="sequence variant" id="VAR_052671" description="In dbSNP:rs35565630.">
    <original>T</original>
    <variation>M</variation>
    <location>
        <position position="274"/>
    </location>
</feature>
<feature type="sequence variant" id="VAR_052672" description="In dbSNP:rs6070697." evidence="10">
    <original>R</original>
    <variation>H</variation>
    <location>
        <position position="307"/>
    </location>
</feature>
<feature type="sequence variant" id="VAR_063411" description="In MACTHC1; dbSNP:rs121918555." evidence="10">
    <original>R</original>
    <variation>W</variation>
    <location>
        <position position="318"/>
    </location>
</feature>
<name>TBB1_HUMAN</name>
<protein>
    <recommendedName>
        <fullName>Tubulin beta-1 chain</fullName>
    </recommendedName>
</protein>
<evidence type="ECO:0000250" key="1">
    <source>
        <dbReference type="UniProtKB" id="P07437"/>
    </source>
</evidence>
<evidence type="ECO:0000250" key="2">
    <source>
        <dbReference type="UniProtKB" id="P68363"/>
    </source>
</evidence>
<evidence type="ECO:0000250" key="3">
    <source>
        <dbReference type="UniProtKB" id="P99024"/>
    </source>
</evidence>
<evidence type="ECO:0000250" key="4">
    <source>
        <dbReference type="UniProtKB" id="Q13509"/>
    </source>
</evidence>
<evidence type="ECO:0000250" key="5">
    <source>
        <dbReference type="UniProtKB" id="Q2T9S0"/>
    </source>
</evidence>
<evidence type="ECO:0000256" key="6">
    <source>
        <dbReference type="SAM" id="MobiDB-lite"/>
    </source>
</evidence>
<evidence type="ECO:0000269" key="7">
    <source>
    </source>
</evidence>
<evidence type="ECO:0000269" key="8">
    <source>
    </source>
</evidence>
<evidence type="ECO:0000269" key="9">
    <source>
    </source>
</evidence>
<evidence type="ECO:0000269" key="10">
    <source>
    </source>
</evidence>
<evidence type="ECO:0000269" key="11">
    <source>
    </source>
</evidence>
<evidence type="ECO:0000269" key="12">
    <source>
    </source>
</evidence>
<evidence type="ECO:0000305" key="13"/>
<evidence type="ECO:0000305" key="14">
    <source>
    </source>
</evidence>
<reference key="1">
    <citation type="submission" date="2000-07" db="EMBL/GenBank/DDBJ databases">
        <title>Mapping and characterization of the human TUBB1 gene.</title>
        <authorList>
            <person name="Gross C."/>
            <person name="Kussmann S."/>
            <person name="Hehr A."/>
            <person name="Hansmann I."/>
            <person name="Schlote D."/>
        </authorList>
    </citation>
    <scope>NUCLEOTIDE SEQUENCE [MRNA]</scope>
</reference>
<reference key="2">
    <citation type="journal article" date="2001" name="Nature">
        <title>The DNA sequence and comparative analysis of human chromosome 20.</title>
        <authorList>
            <person name="Deloukas P."/>
            <person name="Matthews L.H."/>
            <person name="Ashurst J.L."/>
            <person name="Burton J."/>
            <person name="Gilbert J.G.R."/>
            <person name="Jones M."/>
            <person name="Stavrides G."/>
            <person name="Almeida J.P."/>
            <person name="Babbage A.K."/>
            <person name="Bagguley C.L."/>
            <person name="Bailey J."/>
            <person name="Barlow K.F."/>
            <person name="Bates K.N."/>
            <person name="Beard L.M."/>
            <person name="Beare D.M."/>
            <person name="Beasley O.P."/>
            <person name="Bird C.P."/>
            <person name="Blakey S.E."/>
            <person name="Bridgeman A.M."/>
            <person name="Brown A.J."/>
            <person name="Buck D."/>
            <person name="Burrill W.D."/>
            <person name="Butler A.P."/>
            <person name="Carder C."/>
            <person name="Carter N.P."/>
            <person name="Chapman J.C."/>
            <person name="Clamp M."/>
            <person name="Clark G."/>
            <person name="Clark L.N."/>
            <person name="Clark S.Y."/>
            <person name="Clee C.M."/>
            <person name="Clegg S."/>
            <person name="Cobley V.E."/>
            <person name="Collier R.E."/>
            <person name="Connor R.E."/>
            <person name="Corby N.R."/>
            <person name="Coulson A."/>
            <person name="Coville G.J."/>
            <person name="Deadman R."/>
            <person name="Dhami P.D."/>
            <person name="Dunn M."/>
            <person name="Ellington A.G."/>
            <person name="Frankland J.A."/>
            <person name="Fraser A."/>
            <person name="French L."/>
            <person name="Garner P."/>
            <person name="Grafham D.V."/>
            <person name="Griffiths C."/>
            <person name="Griffiths M.N.D."/>
            <person name="Gwilliam R."/>
            <person name="Hall R.E."/>
            <person name="Hammond S."/>
            <person name="Harley J.L."/>
            <person name="Heath P.D."/>
            <person name="Ho S."/>
            <person name="Holden J.L."/>
            <person name="Howden P.J."/>
            <person name="Huckle E."/>
            <person name="Hunt A.R."/>
            <person name="Hunt S.E."/>
            <person name="Jekosch K."/>
            <person name="Johnson C.M."/>
            <person name="Johnson D."/>
            <person name="Kay M.P."/>
            <person name="Kimberley A.M."/>
            <person name="King A."/>
            <person name="Knights A."/>
            <person name="Laird G.K."/>
            <person name="Lawlor S."/>
            <person name="Lehvaeslaiho M.H."/>
            <person name="Leversha M.A."/>
            <person name="Lloyd C."/>
            <person name="Lloyd D.M."/>
            <person name="Lovell J.D."/>
            <person name="Marsh V.L."/>
            <person name="Martin S.L."/>
            <person name="McConnachie L.J."/>
            <person name="McLay K."/>
            <person name="McMurray A.A."/>
            <person name="Milne S.A."/>
            <person name="Mistry D."/>
            <person name="Moore M.J.F."/>
            <person name="Mullikin J.C."/>
            <person name="Nickerson T."/>
            <person name="Oliver K."/>
            <person name="Parker A."/>
            <person name="Patel R."/>
            <person name="Pearce T.A.V."/>
            <person name="Peck A.I."/>
            <person name="Phillimore B.J.C.T."/>
            <person name="Prathalingam S.R."/>
            <person name="Plumb R.W."/>
            <person name="Ramsay H."/>
            <person name="Rice C.M."/>
            <person name="Ross M.T."/>
            <person name="Scott C.E."/>
            <person name="Sehra H.K."/>
            <person name="Shownkeen R."/>
            <person name="Sims S."/>
            <person name="Skuce C.D."/>
            <person name="Smith M.L."/>
            <person name="Soderlund C."/>
            <person name="Steward C.A."/>
            <person name="Sulston J.E."/>
            <person name="Swann R.M."/>
            <person name="Sycamore N."/>
            <person name="Taylor R."/>
            <person name="Tee L."/>
            <person name="Thomas D.W."/>
            <person name="Thorpe A."/>
            <person name="Tracey A."/>
            <person name="Tromans A.C."/>
            <person name="Vaudin M."/>
            <person name="Wall M."/>
            <person name="Wallis J.M."/>
            <person name="Whitehead S.L."/>
            <person name="Whittaker P."/>
            <person name="Willey D.L."/>
            <person name="Williams L."/>
            <person name="Williams S.A."/>
            <person name="Wilming L."/>
            <person name="Wray P.W."/>
            <person name="Hubbard T."/>
            <person name="Durbin R.M."/>
            <person name="Bentley D.R."/>
            <person name="Beck S."/>
            <person name="Rogers J."/>
        </authorList>
    </citation>
    <scope>NUCLEOTIDE SEQUENCE [LARGE SCALE GENOMIC DNA]</scope>
</reference>
<reference key="3">
    <citation type="journal article" date="2004" name="Genome Res.">
        <title>The status, quality, and expansion of the NIH full-length cDNA project: the Mammalian Gene Collection (MGC).</title>
        <authorList>
            <consortium name="The MGC Project Team"/>
        </authorList>
    </citation>
    <scope>NUCLEOTIDE SEQUENCE [LARGE SCALE MRNA]</scope>
    <source>
        <tissue>Brain</tissue>
    </source>
</reference>
<reference key="4">
    <citation type="journal article" date="2003" name="Nat. Biotechnol.">
        <title>Exploring proteomes and analyzing protein processing by mass spectrometric identification of sorted N-terminal peptides.</title>
        <authorList>
            <person name="Gevaert K."/>
            <person name="Goethals M."/>
            <person name="Martens L."/>
            <person name="Van Damme J."/>
            <person name="Staes A."/>
            <person name="Thomas G.R."/>
            <person name="Vandekerckhove J."/>
        </authorList>
    </citation>
    <scope>PROTEIN SEQUENCE OF 38-46 AND 263-281</scope>
    <source>
        <tissue>Platelet</tissue>
    </source>
</reference>
<reference key="5">
    <citation type="journal article" date="2006" name="Mol. Biol. Cell">
        <title>Microtubule regulation in mitosis: tubulin phosphorylation by the cyclin-dependent kinase Cdk1.</title>
        <authorList>
            <person name="Fourest-Lieuvin A."/>
            <person name="Peris L."/>
            <person name="Gache V."/>
            <person name="Garcia-Saez I."/>
            <person name="Juillan-Binard C."/>
            <person name="Lantez V."/>
            <person name="Job D."/>
        </authorList>
    </citation>
    <scope>PHOSPHORYLATION AT SER-172</scope>
</reference>
<reference key="6">
    <citation type="journal article" date="2008" name="J. Biol. Chem.">
        <title>RanBP10 is a cytoplasmic guanine nucleotide exchange factor that modulates noncentrosomal microtubules.</title>
        <authorList>
            <person name="Schulze H."/>
            <person name="Dose M."/>
            <person name="Korpal M."/>
            <person name="Meyer I."/>
            <person name="Italiano J.E. Jr."/>
            <person name="Shivdasani R.A."/>
        </authorList>
    </citation>
    <scope>INTERACTION WITH RANBP10</scope>
</reference>
<reference key="7">
    <citation type="journal article" date="2009" name="Cell">
        <title>Evolutionary divergence of enzymatic mechanisms for posttranslational polyglycylation.</title>
        <authorList>
            <person name="Rogowski K."/>
            <person name="Juge F."/>
            <person name="van Dijk J."/>
            <person name="Wloga D."/>
            <person name="Strub J.-M."/>
            <person name="Levilliers N."/>
            <person name="Thomas D."/>
            <person name="Bre M.-H."/>
            <person name="Van Dorsselaer A."/>
            <person name="Gaertig J."/>
            <person name="Janke C."/>
        </authorList>
    </citation>
    <scope>GLYCYLATION</scope>
</reference>
<reference key="8">
    <citation type="journal article" date="2010" name="Cytoskeleton">
        <title>Tumoral and tissue-specific expression of the major human beta-tubulin isotypes.</title>
        <authorList>
            <person name="Leandro-Garcia L.J."/>
            <person name="Leskela S."/>
            <person name="Landa I."/>
            <person name="Montero-Conde C."/>
            <person name="Lopez-Jimenez E."/>
            <person name="Leton R."/>
            <person name="Cascon A."/>
            <person name="Robledo M."/>
            <person name="Rodriguez-Antona C."/>
        </authorList>
    </citation>
    <scope>TISSUE SPECIFICITY</scope>
</reference>
<reference key="9">
    <citation type="journal article" date="2016" name="Cell">
        <title>Graded control of microtubule severing by tubulin glutamylation.</title>
        <authorList>
            <person name="Valenstein M.L."/>
            <person name="Roll-Mecak A."/>
        </authorList>
    </citation>
    <scope>GLUTAMYLATION</scope>
</reference>
<reference key="10">
    <citation type="journal article" date="2005" name="Blood">
        <title>The TUBB1 Q43P functional polymorphism reduces the risk of cardiovascular disease in men by modulating platelet function and structure.</title>
        <authorList>
            <person name="Freson K."/>
            <person name="De Vos R."/>
            <person name="Wittevrongel C."/>
            <person name="Thys C."/>
            <person name="Defoor J."/>
            <person name="Vanhees L."/>
            <person name="Vermylen J."/>
            <person name="Peerlinck K."/>
            <person name="Van Geet C."/>
        </authorList>
    </citation>
    <scope>VARIANT PRO-43</scope>
</reference>
<reference key="11">
    <citation type="journal article" date="2009" name="Blood">
        <title>Mutation of the beta1-tubulin gene associated with congenital macrothrombocytopenia affecting microtubule assembly.</title>
        <authorList>
            <person name="Kunishima S."/>
            <person name="Kobayashi R."/>
            <person name="Itoh T.J."/>
            <person name="Hamaguchi M."/>
            <person name="Saito H."/>
        </authorList>
    </citation>
    <scope>VARIANTS PRO-43 AND HIS-307</scope>
    <scope>VARIANT MACTHC1 TRP-318</scope>
    <scope>SUBCELLULAR LOCATION</scope>
</reference>